<sequence>MVMIMRICIQPVGDVNDEILKFLKKKFGEVFGMCEILPKIDIPIYAYNFSRGQFNSTLILKSLPTVEDIVLGVTEVDIYADNLNFVFGEAELFGKRALISLARLRPEFYGLPPNKDVLKIRALKEAIHEIGHVLGLIHCENKRCVMSFSNSIIDVDLKDWRYCKKCLKKLQDRGIYISI</sequence>
<dbReference type="EC" id="3.4.-.-" evidence="1"/>
<dbReference type="EMBL" id="L77117">
    <property type="protein sequence ID" value="AAB98269.1"/>
    <property type="molecule type" value="Genomic_DNA"/>
</dbReference>
<dbReference type="PIR" id="B64335">
    <property type="entry name" value="B64335"/>
</dbReference>
<dbReference type="SMR" id="Q57729"/>
<dbReference type="FunCoup" id="Q57729">
    <property type="interactions" value="1"/>
</dbReference>
<dbReference type="STRING" id="243232.MJ_0281"/>
<dbReference type="MEROPS" id="M54.001"/>
<dbReference type="PaxDb" id="243232-MJ_0281"/>
<dbReference type="EnsemblBacteria" id="AAB98269">
    <property type="protein sequence ID" value="AAB98269"/>
    <property type="gene ID" value="MJ_0281"/>
</dbReference>
<dbReference type="KEGG" id="mja:MJ_0281"/>
<dbReference type="eggNOG" id="arCOG00458">
    <property type="taxonomic scope" value="Archaea"/>
</dbReference>
<dbReference type="HOGENOM" id="CLU_108521_2_0_2"/>
<dbReference type="InParanoid" id="Q57729"/>
<dbReference type="OrthoDB" id="50281at2157"/>
<dbReference type="PhylomeDB" id="Q57729"/>
<dbReference type="Proteomes" id="UP000000805">
    <property type="component" value="Chromosome"/>
</dbReference>
<dbReference type="GO" id="GO:0008237">
    <property type="term" value="F:metallopeptidase activity"/>
    <property type="evidence" value="ECO:0007669"/>
    <property type="project" value="UniProtKB-UniRule"/>
</dbReference>
<dbReference type="GO" id="GO:0008270">
    <property type="term" value="F:zinc ion binding"/>
    <property type="evidence" value="ECO:0007669"/>
    <property type="project" value="UniProtKB-UniRule"/>
</dbReference>
<dbReference type="GO" id="GO:0006508">
    <property type="term" value="P:proteolysis"/>
    <property type="evidence" value="ECO:0007669"/>
    <property type="project" value="UniProtKB-UniRule"/>
</dbReference>
<dbReference type="CDD" id="cd11375">
    <property type="entry name" value="Peptidase_M54"/>
    <property type="match status" value="1"/>
</dbReference>
<dbReference type="Gene3D" id="3.40.390.10">
    <property type="entry name" value="Collagenase (Catalytic Domain)"/>
    <property type="match status" value="1"/>
</dbReference>
<dbReference type="HAMAP" id="MF_01842">
    <property type="entry name" value="Archaemetzincin"/>
    <property type="match status" value="1"/>
</dbReference>
<dbReference type="InterPro" id="IPR024079">
    <property type="entry name" value="MetalloPept_cat_dom_sf"/>
</dbReference>
<dbReference type="InterPro" id="IPR012962">
    <property type="entry name" value="Pept_M54_archaemetzincn"/>
</dbReference>
<dbReference type="InterPro" id="IPR012091">
    <property type="entry name" value="Pept_M54_archaemetzncn_arc/bac"/>
</dbReference>
<dbReference type="NCBIfam" id="NF033823">
    <property type="entry name" value="archmetzin"/>
    <property type="match status" value="1"/>
</dbReference>
<dbReference type="PANTHER" id="PTHR15910">
    <property type="entry name" value="ARCHAEMETZINCIN"/>
    <property type="match status" value="1"/>
</dbReference>
<dbReference type="PANTHER" id="PTHR15910:SF1">
    <property type="entry name" value="ARCHAEMETZINCIN-2"/>
    <property type="match status" value="1"/>
</dbReference>
<dbReference type="Pfam" id="PF07998">
    <property type="entry name" value="Peptidase_M54"/>
    <property type="match status" value="1"/>
</dbReference>
<dbReference type="PIRSF" id="PIRSF005785">
    <property type="entry name" value="Zn-prot_arch"/>
    <property type="match status" value="1"/>
</dbReference>
<dbReference type="SUPFAM" id="SSF55486">
    <property type="entry name" value="Metalloproteases ('zincins'), catalytic domain"/>
    <property type="match status" value="1"/>
</dbReference>
<name>AMZA_METJA</name>
<accession>Q57729</accession>
<feature type="chain" id="PRO_0000159626" description="Archaemetzincin">
    <location>
        <begin position="1"/>
        <end position="179"/>
    </location>
</feature>
<feature type="active site" description="Proton acceptor" evidence="1">
    <location>
        <position position="129"/>
    </location>
</feature>
<feature type="binding site" evidence="1">
    <location>
        <position position="128"/>
    </location>
    <ligand>
        <name>Zn(2+)</name>
        <dbReference type="ChEBI" id="CHEBI:29105"/>
        <label>1</label>
        <note>catalytic</note>
    </ligand>
</feature>
<feature type="binding site" evidence="1">
    <location>
        <position position="132"/>
    </location>
    <ligand>
        <name>Zn(2+)</name>
        <dbReference type="ChEBI" id="CHEBI:29105"/>
        <label>1</label>
        <note>catalytic</note>
    </ligand>
</feature>
<feature type="binding site" evidence="1">
    <location>
        <position position="138"/>
    </location>
    <ligand>
        <name>Zn(2+)</name>
        <dbReference type="ChEBI" id="CHEBI:29105"/>
        <label>1</label>
        <note>catalytic</note>
    </ligand>
</feature>
<feature type="binding site" evidence="1">
    <location>
        <position position="139"/>
    </location>
    <ligand>
        <name>Zn(2+)</name>
        <dbReference type="ChEBI" id="CHEBI:29105"/>
        <label>2</label>
    </ligand>
</feature>
<feature type="binding site" evidence="1">
    <location>
        <position position="144"/>
    </location>
    <ligand>
        <name>Zn(2+)</name>
        <dbReference type="ChEBI" id="CHEBI:29105"/>
        <label>2</label>
    </ligand>
</feature>
<feature type="binding site" evidence="1">
    <location>
        <position position="163"/>
    </location>
    <ligand>
        <name>Zn(2+)</name>
        <dbReference type="ChEBI" id="CHEBI:29105"/>
        <label>2</label>
    </ligand>
</feature>
<feature type="binding site" evidence="1">
    <location>
        <position position="166"/>
    </location>
    <ligand>
        <name>Zn(2+)</name>
        <dbReference type="ChEBI" id="CHEBI:29105"/>
        <label>2</label>
    </ligand>
</feature>
<proteinExistence type="inferred from homology"/>
<keyword id="KW-0378">Hydrolase</keyword>
<keyword id="KW-0479">Metal-binding</keyword>
<keyword id="KW-0482">Metalloprotease</keyword>
<keyword id="KW-0645">Protease</keyword>
<keyword id="KW-1185">Reference proteome</keyword>
<keyword id="KW-0862">Zinc</keyword>
<organism>
    <name type="scientific">Methanocaldococcus jannaschii (strain ATCC 43067 / DSM 2661 / JAL-1 / JCM 10045 / NBRC 100440)</name>
    <name type="common">Methanococcus jannaschii</name>
    <dbReference type="NCBI Taxonomy" id="243232"/>
    <lineage>
        <taxon>Archaea</taxon>
        <taxon>Methanobacteriati</taxon>
        <taxon>Methanobacteriota</taxon>
        <taxon>Methanomada group</taxon>
        <taxon>Methanococci</taxon>
        <taxon>Methanococcales</taxon>
        <taxon>Methanocaldococcaceae</taxon>
        <taxon>Methanocaldococcus</taxon>
    </lineage>
</organism>
<gene>
    <name evidence="1" type="primary">amzA</name>
    <name type="ordered locus">MJ0281</name>
</gene>
<reference key="1">
    <citation type="journal article" date="1996" name="Science">
        <title>Complete genome sequence of the methanogenic archaeon, Methanococcus jannaschii.</title>
        <authorList>
            <person name="Bult C.J."/>
            <person name="White O."/>
            <person name="Olsen G.J."/>
            <person name="Zhou L."/>
            <person name="Fleischmann R.D."/>
            <person name="Sutton G.G."/>
            <person name="Blake J.A."/>
            <person name="FitzGerald L.M."/>
            <person name="Clayton R.A."/>
            <person name="Gocayne J.D."/>
            <person name="Kerlavage A.R."/>
            <person name="Dougherty B.A."/>
            <person name="Tomb J.-F."/>
            <person name="Adams M.D."/>
            <person name="Reich C.I."/>
            <person name="Overbeek R."/>
            <person name="Kirkness E.F."/>
            <person name="Weinstock K.G."/>
            <person name="Merrick J.M."/>
            <person name="Glodek A."/>
            <person name="Scott J.L."/>
            <person name="Geoghagen N.S.M."/>
            <person name="Weidman J.F."/>
            <person name="Fuhrmann J.L."/>
            <person name="Nguyen D."/>
            <person name="Utterback T.R."/>
            <person name="Kelley J.M."/>
            <person name="Peterson J.D."/>
            <person name="Sadow P.W."/>
            <person name="Hanna M.C."/>
            <person name="Cotton M.D."/>
            <person name="Roberts K.M."/>
            <person name="Hurst M.A."/>
            <person name="Kaine B.P."/>
            <person name="Borodovsky M."/>
            <person name="Klenk H.-P."/>
            <person name="Fraser C.M."/>
            <person name="Smith H.O."/>
            <person name="Woese C.R."/>
            <person name="Venter J.C."/>
        </authorList>
    </citation>
    <scope>NUCLEOTIDE SEQUENCE [LARGE SCALE GENOMIC DNA]</scope>
    <source>
        <strain>ATCC 43067 / DSM 2661 / JAL-1 / JCM 10045 / NBRC 100440</strain>
    </source>
</reference>
<evidence type="ECO:0000255" key="1">
    <source>
        <dbReference type="HAMAP-Rule" id="MF_01842"/>
    </source>
</evidence>
<comment type="function">
    <text evidence="1">Probable zinc metalloprotease whose natural substrate is unknown.</text>
</comment>
<comment type="cofactor">
    <cofactor evidence="1">
        <name>Zn(2+)</name>
        <dbReference type="ChEBI" id="CHEBI:29105"/>
    </cofactor>
    <text evidence="1">Binds 2 Zn(2+) ions per subunit. One is catalytic, whereas the other seems to have a structural role.</text>
</comment>
<comment type="subunit">
    <text evidence="1">Monomer.</text>
</comment>
<comment type="similarity">
    <text evidence="1">Belongs to the peptidase M54 family.</text>
</comment>
<protein>
    <recommendedName>
        <fullName evidence="1">Archaemetzincin</fullName>
        <ecNumber evidence="1">3.4.-.-</ecNumber>
    </recommendedName>
</protein>